<sequence>MPKMKSKKSLAKRVIAKKNGTLKRGKAYRSHRATGKTTKQKRHLEKATIVHVTDMKRIKGLLQK</sequence>
<comment type="similarity">
    <text evidence="1">Belongs to the bacterial ribosomal protein bL35 family.</text>
</comment>
<organism>
    <name type="scientific">Mesoplasma florum (strain ATCC 33453 / NBRC 100688 / NCTC 11704 / L1)</name>
    <name type="common">Acholeplasma florum</name>
    <dbReference type="NCBI Taxonomy" id="265311"/>
    <lineage>
        <taxon>Bacteria</taxon>
        <taxon>Bacillati</taxon>
        <taxon>Mycoplasmatota</taxon>
        <taxon>Mollicutes</taxon>
        <taxon>Entomoplasmatales</taxon>
        <taxon>Entomoplasmataceae</taxon>
        <taxon>Mesoplasma</taxon>
    </lineage>
</organism>
<name>RL35_MESFL</name>
<dbReference type="EMBL" id="AE017263">
    <property type="protein sequence ID" value="AAT75546.1"/>
    <property type="molecule type" value="Genomic_DNA"/>
</dbReference>
<dbReference type="RefSeq" id="WP_011183086.1">
    <property type="nucleotide sequence ID" value="NC_006055.1"/>
</dbReference>
<dbReference type="RefSeq" id="YP_053430.1">
    <property type="nucleotide sequence ID" value="NC_006055.1"/>
</dbReference>
<dbReference type="SMR" id="Q6F1S7"/>
<dbReference type="STRING" id="265311.Mfl189"/>
<dbReference type="PaxDb" id="265311-Mfl189"/>
<dbReference type="EnsemblBacteria" id="AAT75546">
    <property type="protein sequence ID" value="AAT75546"/>
    <property type="gene ID" value="Mfl189"/>
</dbReference>
<dbReference type="GeneID" id="2897692"/>
<dbReference type="KEGG" id="mfl:Mfl189"/>
<dbReference type="PATRIC" id="fig|265311.5.peg.190"/>
<dbReference type="eggNOG" id="COG0291">
    <property type="taxonomic scope" value="Bacteria"/>
</dbReference>
<dbReference type="HOGENOM" id="CLU_169643_3_1_14"/>
<dbReference type="OrthoDB" id="47476at2"/>
<dbReference type="Proteomes" id="UP000006647">
    <property type="component" value="Chromosome"/>
</dbReference>
<dbReference type="GO" id="GO:0022625">
    <property type="term" value="C:cytosolic large ribosomal subunit"/>
    <property type="evidence" value="ECO:0007669"/>
    <property type="project" value="TreeGrafter"/>
</dbReference>
<dbReference type="GO" id="GO:0003735">
    <property type="term" value="F:structural constituent of ribosome"/>
    <property type="evidence" value="ECO:0007669"/>
    <property type="project" value="InterPro"/>
</dbReference>
<dbReference type="GO" id="GO:0006412">
    <property type="term" value="P:translation"/>
    <property type="evidence" value="ECO:0007669"/>
    <property type="project" value="UniProtKB-UniRule"/>
</dbReference>
<dbReference type="FunFam" id="4.10.410.60:FF:000001">
    <property type="entry name" value="50S ribosomal protein L35"/>
    <property type="match status" value="1"/>
</dbReference>
<dbReference type="Gene3D" id="4.10.410.60">
    <property type="match status" value="1"/>
</dbReference>
<dbReference type="HAMAP" id="MF_00514">
    <property type="entry name" value="Ribosomal_bL35"/>
    <property type="match status" value="1"/>
</dbReference>
<dbReference type="InterPro" id="IPR001706">
    <property type="entry name" value="Ribosomal_bL35"/>
</dbReference>
<dbReference type="InterPro" id="IPR021137">
    <property type="entry name" value="Ribosomal_bL35-like"/>
</dbReference>
<dbReference type="InterPro" id="IPR018265">
    <property type="entry name" value="Ribosomal_bL35_CS"/>
</dbReference>
<dbReference type="InterPro" id="IPR037229">
    <property type="entry name" value="Ribosomal_bL35_sf"/>
</dbReference>
<dbReference type="NCBIfam" id="TIGR00001">
    <property type="entry name" value="rpmI_bact"/>
    <property type="match status" value="1"/>
</dbReference>
<dbReference type="PANTHER" id="PTHR33343">
    <property type="entry name" value="54S RIBOSOMAL PROTEIN BL35M"/>
    <property type="match status" value="1"/>
</dbReference>
<dbReference type="PANTHER" id="PTHR33343:SF1">
    <property type="entry name" value="LARGE RIBOSOMAL SUBUNIT PROTEIN BL35M"/>
    <property type="match status" value="1"/>
</dbReference>
<dbReference type="Pfam" id="PF01632">
    <property type="entry name" value="Ribosomal_L35p"/>
    <property type="match status" value="1"/>
</dbReference>
<dbReference type="PRINTS" id="PR00064">
    <property type="entry name" value="RIBOSOMALL35"/>
</dbReference>
<dbReference type="SUPFAM" id="SSF143034">
    <property type="entry name" value="L35p-like"/>
    <property type="match status" value="1"/>
</dbReference>
<dbReference type="PROSITE" id="PS00936">
    <property type="entry name" value="RIBOSOMAL_L35"/>
    <property type="match status" value="1"/>
</dbReference>
<accession>Q6F1S7</accession>
<feature type="chain" id="PRO_0000177378" description="Large ribosomal subunit protein bL35">
    <location>
        <begin position="1"/>
        <end position="64"/>
    </location>
</feature>
<feature type="region of interest" description="Disordered" evidence="2">
    <location>
        <begin position="1"/>
        <end position="43"/>
    </location>
</feature>
<reference key="1">
    <citation type="submission" date="2004-06" db="EMBL/GenBank/DDBJ databases">
        <authorList>
            <person name="Birren B.W."/>
            <person name="Stange-Thomann N."/>
            <person name="Hafez N."/>
            <person name="DeCaprio D."/>
            <person name="Fisher S."/>
            <person name="Butler J."/>
            <person name="Elkins T."/>
            <person name="Kodira C.D."/>
            <person name="Major J."/>
            <person name="Wang S."/>
            <person name="Nicol R."/>
            <person name="Nusbaum C."/>
        </authorList>
    </citation>
    <scope>NUCLEOTIDE SEQUENCE [LARGE SCALE GENOMIC DNA]</scope>
    <source>
        <strain>ATCC 33453 / NBRC 100688 / NCTC 11704 / L1</strain>
    </source>
</reference>
<keyword id="KW-1185">Reference proteome</keyword>
<keyword id="KW-0687">Ribonucleoprotein</keyword>
<keyword id="KW-0689">Ribosomal protein</keyword>
<proteinExistence type="inferred from homology"/>
<protein>
    <recommendedName>
        <fullName evidence="1">Large ribosomal subunit protein bL35</fullName>
    </recommendedName>
    <alternativeName>
        <fullName evidence="3">50S ribosomal protein L35</fullName>
    </alternativeName>
</protein>
<gene>
    <name evidence="1" type="primary">rpmI</name>
    <name type="ordered locus">Mfl189</name>
</gene>
<evidence type="ECO:0000255" key="1">
    <source>
        <dbReference type="HAMAP-Rule" id="MF_00514"/>
    </source>
</evidence>
<evidence type="ECO:0000256" key="2">
    <source>
        <dbReference type="SAM" id="MobiDB-lite"/>
    </source>
</evidence>
<evidence type="ECO:0000305" key="3"/>